<gene>
    <name type="ordered locus">Ping_0587</name>
</gene>
<evidence type="ECO:0000255" key="1">
    <source>
        <dbReference type="HAMAP-Rule" id="MF_00010"/>
    </source>
</evidence>
<comment type="subcellular location">
    <subcellularLocation>
        <location evidence="1">Cell inner membrane</location>
        <topology evidence="1">Multi-pass membrane protein</topology>
    </subcellularLocation>
</comment>
<comment type="similarity">
    <text evidence="1">Belongs to the UPF0060 family.</text>
</comment>
<protein>
    <recommendedName>
        <fullName evidence="1">UPF0060 membrane protein Ping_0587</fullName>
    </recommendedName>
</protein>
<organism>
    <name type="scientific">Psychromonas ingrahamii (strain DSM 17664 / CCUG 51855 / 37)</name>
    <dbReference type="NCBI Taxonomy" id="357804"/>
    <lineage>
        <taxon>Bacteria</taxon>
        <taxon>Pseudomonadati</taxon>
        <taxon>Pseudomonadota</taxon>
        <taxon>Gammaproteobacteria</taxon>
        <taxon>Alteromonadales</taxon>
        <taxon>Psychromonadaceae</taxon>
        <taxon>Psychromonas</taxon>
    </lineage>
</organism>
<keyword id="KW-0997">Cell inner membrane</keyword>
<keyword id="KW-1003">Cell membrane</keyword>
<keyword id="KW-0472">Membrane</keyword>
<keyword id="KW-1185">Reference proteome</keyword>
<keyword id="KW-0812">Transmembrane</keyword>
<keyword id="KW-1133">Transmembrane helix</keyword>
<accession>A1SSH6</accession>
<dbReference type="EMBL" id="CP000510">
    <property type="protein sequence ID" value="ABM02441.1"/>
    <property type="molecule type" value="Genomic_DNA"/>
</dbReference>
<dbReference type="RefSeq" id="WP_011769000.1">
    <property type="nucleotide sequence ID" value="NC_008709.1"/>
</dbReference>
<dbReference type="SMR" id="A1SSH6"/>
<dbReference type="KEGG" id="pin:Ping_0587"/>
<dbReference type="eggNOG" id="COG1742">
    <property type="taxonomic scope" value="Bacteria"/>
</dbReference>
<dbReference type="HOGENOM" id="CLU_117653_2_0_6"/>
<dbReference type="OrthoDB" id="123240at2"/>
<dbReference type="Proteomes" id="UP000000639">
    <property type="component" value="Chromosome"/>
</dbReference>
<dbReference type="GO" id="GO:0005886">
    <property type="term" value="C:plasma membrane"/>
    <property type="evidence" value="ECO:0007669"/>
    <property type="project" value="UniProtKB-SubCell"/>
</dbReference>
<dbReference type="HAMAP" id="MF_00010">
    <property type="entry name" value="UPF0060"/>
    <property type="match status" value="1"/>
</dbReference>
<dbReference type="InterPro" id="IPR003844">
    <property type="entry name" value="UPF0060"/>
</dbReference>
<dbReference type="NCBIfam" id="NF002586">
    <property type="entry name" value="PRK02237.1"/>
    <property type="match status" value="1"/>
</dbReference>
<dbReference type="PANTHER" id="PTHR36116">
    <property type="entry name" value="UPF0060 MEMBRANE PROTEIN YNFA"/>
    <property type="match status" value="1"/>
</dbReference>
<dbReference type="PANTHER" id="PTHR36116:SF1">
    <property type="entry name" value="UPF0060 MEMBRANE PROTEIN YNFA"/>
    <property type="match status" value="1"/>
</dbReference>
<dbReference type="Pfam" id="PF02694">
    <property type="entry name" value="UPF0060"/>
    <property type="match status" value="1"/>
</dbReference>
<dbReference type="SUPFAM" id="SSF103481">
    <property type="entry name" value="Multidrug resistance efflux transporter EmrE"/>
    <property type="match status" value="1"/>
</dbReference>
<reference key="1">
    <citation type="journal article" date="2008" name="BMC Genomics">
        <title>Genomics of an extreme psychrophile, Psychromonas ingrahamii.</title>
        <authorList>
            <person name="Riley M."/>
            <person name="Staley J.T."/>
            <person name="Danchin A."/>
            <person name="Wang T.Z."/>
            <person name="Brettin T.S."/>
            <person name="Hauser L.J."/>
            <person name="Land M.L."/>
            <person name="Thompson L.S."/>
        </authorList>
    </citation>
    <scope>NUCLEOTIDE SEQUENCE [LARGE SCALE GENOMIC DNA]</scope>
    <source>
        <strain>DSM 17664 / CCUG 51855 / 37</strain>
    </source>
</reference>
<name>Y587_PSYIN</name>
<sequence length="110" mass="12163">MEALKIFGIFTVTAVAEIVGCYLPYLWLRQGHSIWLLVPAAFSLAAFVWLLTLHPEAAGRTYAAYGGIYVSVALMWLWLVESTRPTMTDLLGVLICIIGMAVIMFGPRNV</sequence>
<feature type="chain" id="PRO_0000282253" description="UPF0060 membrane protein Ping_0587">
    <location>
        <begin position="1"/>
        <end position="110"/>
    </location>
</feature>
<feature type="transmembrane region" description="Helical" evidence="1">
    <location>
        <begin position="6"/>
        <end position="26"/>
    </location>
</feature>
<feature type="transmembrane region" description="Helical" evidence="1">
    <location>
        <begin position="33"/>
        <end position="53"/>
    </location>
</feature>
<feature type="transmembrane region" description="Helical" evidence="1">
    <location>
        <begin position="61"/>
        <end position="81"/>
    </location>
</feature>
<feature type="transmembrane region" description="Helical" evidence="1">
    <location>
        <begin position="87"/>
        <end position="107"/>
    </location>
</feature>
<proteinExistence type="inferred from homology"/>